<organism>
    <name type="scientific">Oryza sativa subsp. indica</name>
    <name type="common">Rice</name>
    <dbReference type="NCBI Taxonomy" id="39946"/>
    <lineage>
        <taxon>Eukaryota</taxon>
        <taxon>Viridiplantae</taxon>
        <taxon>Streptophyta</taxon>
        <taxon>Embryophyta</taxon>
        <taxon>Tracheophyta</taxon>
        <taxon>Spermatophyta</taxon>
        <taxon>Magnoliopsida</taxon>
        <taxon>Liliopsida</taxon>
        <taxon>Poales</taxon>
        <taxon>Poaceae</taxon>
        <taxon>BOP clade</taxon>
        <taxon>Oryzoideae</taxon>
        <taxon>Oryzeae</taxon>
        <taxon>Oryzinae</taxon>
        <taxon>Oryza</taxon>
        <taxon>Oryza sativa</taxon>
    </lineage>
</organism>
<keyword id="KW-0002">3D-structure</keyword>
<keyword id="KW-0406">Ion transport</keyword>
<keyword id="KW-0472">Membrane</keyword>
<keyword id="KW-0630">Potassium</keyword>
<keyword id="KW-0633">Potassium transport</keyword>
<keyword id="KW-0915">Sodium</keyword>
<keyword id="KW-0739">Sodium transport</keyword>
<keyword id="KW-0812">Transmembrane</keyword>
<keyword id="KW-1133">Transmembrane helix</keyword>
<keyword id="KW-0813">Transport</keyword>
<feature type="chain" id="PRO_0000070467" description="Cation transporter HKT2;2">
    <location>
        <begin position="1"/>
        <end position="530"/>
    </location>
</feature>
<feature type="topological domain" description="Cytoplasmic" evidence="1">
    <location>
        <begin position="1"/>
        <end position="40"/>
    </location>
</feature>
<feature type="transmembrane region" description="Helical; Name=1" evidence="1">
    <location>
        <begin position="41"/>
        <end position="61"/>
    </location>
</feature>
<feature type="transmembrane region" description="Helical; Name=2" evidence="1">
    <location>
        <begin position="102"/>
        <end position="122"/>
    </location>
</feature>
<feature type="topological domain" description="Cytoplasmic" evidence="1">
    <location>
        <begin position="123"/>
        <end position="186"/>
    </location>
</feature>
<feature type="transmembrane region" description="Helical; Name=3" evidence="1">
    <location>
        <begin position="187"/>
        <end position="207"/>
    </location>
</feature>
<feature type="transmembrane region" description="Helical; Name=4" evidence="1">
    <location>
        <begin position="260"/>
        <end position="280"/>
    </location>
</feature>
<feature type="topological domain" description="Cytoplasmic" evidence="1">
    <location>
        <begin position="281"/>
        <end position="317"/>
    </location>
</feature>
<feature type="transmembrane region" description="Helical; Name=5" evidence="1">
    <location>
        <begin position="318"/>
        <end position="338"/>
    </location>
</feature>
<feature type="transmembrane region" description="Helical; Name=6" evidence="1">
    <location>
        <begin position="372"/>
        <end position="392"/>
    </location>
</feature>
<feature type="topological domain" description="Cytoplasmic" evidence="1">
    <location>
        <begin position="393"/>
        <end position="420"/>
    </location>
</feature>
<feature type="transmembrane region" description="Helical; Name=7" evidence="1">
    <location>
        <begin position="421"/>
        <end position="441"/>
    </location>
</feature>
<feature type="transmembrane region" description="Helical; Name=8" evidence="1">
    <location>
        <begin position="494"/>
        <end position="514"/>
    </location>
</feature>
<feature type="topological domain" description="Cytoplasmic" evidence="1">
    <location>
        <begin position="515"/>
        <end position="530"/>
    </location>
</feature>
<feature type="mutagenesis site" description="Loss of selectivity for potassium uptake." evidence="3">
    <original>G</original>
    <variation>S</variation>
    <location>
        <position position="88"/>
    </location>
</feature>
<feature type="helix" evidence="7">
    <location>
        <begin position="23"/>
        <end position="37"/>
    </location>
</feature>
<feature type="helix" evidence="7">
    <location>
        <begin position="40"/>
        <end position="61"/>
    </location>
</feature>
<feature type="helix" evidence="7">
    <location>
        <begin position="73"/>
        <end position="84"/>
    </location>
</feature>
<feature type="helix" evidence="7">
    <location>
        <begin position="94"/>
        <end position="96"/>
    </location>
</feature>
<feature type="helix" evidence="7">
    <location>
        <begin position="99"/>
        <end position="112"/>
    </location>
</feature>
<feature type="helix" evidence="7">
    <location>
        <begin position="114"/>
        <end position="124"/>
    </location>
</feature>
<feature type="helix" evidence="7">
    <location>
        <begin position="179"/>
        <end position="213"/>
    </location>
</feature>
<feature type="helix" evidence="7">
    <location>
        <begin position="215"/>
        <end position="224"/>
    </location>
</feature>
<feature type="helix" evidence="7">
    <location>
        <begin position="228"/>
        <end position="241"/>
    </location>
</feature>
<feature type="strand" evidence="7">
    <location>
        <begin position="247"/>
        <end position="250"/>
    </location>
</feature>
<feature type="helix" evidence="7">
    <location>
        <begin position="253"/>
        <end position="255"/>
    </location>
</feature>
<feature type="helix" evidence="7">
    <location>
        <begin position="259"/>
        <end position="272"/>
    </location>
</feature>
<feature type="helix" evidence="7">
    <location>
        <begin position="276"/>
        <end position="291"/>
    </location>
</feature>
<feature type="helix" evidence="7">
    <location>
        <begin position="294"/>
        <end position="300"/>
    </location>
</feature>
<feature type="turn" evidence="7">
    <location>
        <begin position="301"/>
        <end position="305"/>
    </location>
</feature>
<feature type="helix" evidence="7">
    <location>
        <begin position="314"/>
        <end position="339"/>
    </location>
</feature>
<feature type="helix" evidence="7">
    <location>
        <begin position="343"/>
        <end position="345"/>
    </location>
</feature>
<feature type="helix" evidence="7">
    <location>
        <begin position="350"/>
        <end position="363"/>
    </location>
</feature>
<feature type="turn" evidence="7">
    <location>
        <begin position="364"/>
        <end position="367"/>
    </location>
</feature>
<feature type="helix" evidence="7">
    <location>
        <begin position="374"/>
        <end position="376"/>
    </location>
</feature>
<feature type="helix" evidence="7">
    <location>
        <begin position="379"/>
        <end position="390"/>
    </location>
</feature>
<feature type="helix" evidence="7">
    <location>
        <begin position="415"/>
        <end position="422"/>
    </location>
</feature>
<feature type="helix" evidence="7">
    <location>
        <begin position="426"/>
        <end position="440"/>
    </location>
</feature>
<feature type="helix" evidence="7">
    <location>
        <begin position="442"/>
        <end position="447"/>
    </location>
</feature>
<feature type="turn" evidence="7">
    <location>
        <begin position="449"/>
        <end position="451"/>
    </location>
</feature>
<feature type="helix" evidence="7">
    <location>
        <begin position="454"/>
        <end position="466"/>
    </location>
</feature>
<feature type="helix" evidence="7">
    <location>
        <begin position="476"/>
        <end position="480"/>
    </location>
</feature>
<feature type="helix" evidence="7">
    <location>
        <begin position="495"/>
        <end position="498"/>
    </location>
</feature>
<feature type="helix" evidence="7">
    <location>
        <begin position="501"/>
        <end position="515"/>
    </location>
</feature>
<feature type="helix" evidence="7">
    <location>
        <begin position="517"/>
        <end position="520"/>
    </location>
</feature>
<proteinExistence type="evidence at protein level"/>
<accession>Q93XI5</accession>
<protein>
    <recommendedName>
        <fullName evidence="5">Cation transporter HKT2;2</fullName>
        <shortName evidence="5">OsHKT2;2</shortName>
    </recommendedName>
    <alternativeName>
        <fullName evidence="4">Cation transporter HKT2</fullName>
        <shortName evidence="4">OsHKT2</shortName>
    </alternativeName>
    <alternativeName>
        <fullName evidence="4">Po-OsHKT2</fullName>
    </alternativeName>
</protein>
<evidence type="ECO:0000255" key="1"/>
<evidence type="ECO:0000269" key="2">
    <source>
    </source>
</evidence>
<evidence type="ECO:0000269" key="3">
    <source>
    </source>
</evidence>
<evidence type="ECO:0000303" key="4">
    <source>
    </source>
</evidence>
<evidence type="ECO:0000303" key="5">
    <source>
    </source>
</evidence>
<evidence type="ECO:0000305" key="6"/>
<evidence type="ECO:0007829" key="7">
    <source>
        <dbReference type="PDB" id="8K69"/>
    </source>
</evidence>
<name>HKT22_ORYSI</name>
<sequence length="530" mass="59152">MTSIYQEFIHTKCQSFRSIGRYVLHSIVLIYRFVSLHVHPFWIQLSYFLLISILGSVLLMFLKPSSPEFKPGYIDMLFLSTSAMTVSGLSTIEMEVLSSSQIVVLTLLMLVGGEVFVSFLGLMLRLKHKHNPEFSGDRVSSVPIELDTIEPTRTVMSSEELQIEAAAPDVPSSTIKDLKRSKRLRWFLGFVVFSYFVVIHVVGFLLVLWYISRVSSAKAPLKKKGINIALFSFSVTVSSFANGGLVPTNENMAIFSKNPGLLLLFIGQILAGNTLYPLFLRILIWFLGKVTKLKDLKLMIKNSDELQYDYLLPKLPTAFLASTVIGLMASLVTLFGSVDWNSSVFDGLSSYQKIINALFMAVNARHSGENSIDCSLIAPAVLVLFIILMYLPPSTTFALSNGDEKTANKKAKRKLGLVVRNLAFSQLACNAVFVIVALITERSRLRNDPLNFSALNMIFEVISAYGNVGLTTGYSCSRLQKLHPGSICQDKPYSLSGWWSDEGKLLLVSVMLYGRLKAFTKGTGEYWRLW</sequence>
<comment type="function">
    <text evidence="2 3">Seems to be involved in regulation of potassium-sodium homeostasis (PubMed:11489190, PubMed:11959905). Seems to act as a potassium-sodium cotransporter, which mediates increased potassium uptake under external sodium accumulation and contributes to salt-tolerance in cultivar indica Pokkali (PubMed:11489190, PubMed:11959905).</text>
</comment>
<comment type="subcellular location">
    <subcellularLocation>
        <location evidence="1">Membrane</location>
        <topology evidence="1">Multi-pass membrane protein</topology>
    </subcellularLocation>
</comment>
<comment type="induction">
    <text evidence="2">Induced by potassium starvation in roots. Down-regulated by sodium.</text>
</comment>
<comment type="domain">
    <text evidence="3">HKT transporters are proposed to contain 4 pore-forming regions enclosed by transmembrane segments with each containing a potassium channel-like selectivity filter motif.</text>
</comment>
<comment type="similarity">
    <text evidence="6">Belongs to the TrkH potassium transport family. HKT (TC 2.A.38.3) subfamily.</text>
</comment>
<comment type="caution">
    <text evidence="6">HKT2 is found in salt-tolerant cultivar indica Pokkali. It does not exist in cultivar indica 93-11 or japonica Nipponbare.</text>
</comment>
<dbReference type="EMBL" id="AB061313">
    <property type="protein sequence ID" value="BAB61791.1"/>
    <property type="molecule type" value="mRNA"/>
</dbReference>
<dbReference type="PDB" id="8K69">
    <property type="method" value="EM"/>
    <property type="resolution" value="2.33 A"/>
    <property type="chains" value="A/B=1-530"/>
</dbReference>
<dbReference type="PDBsum" id="8K69"/>
<dbReference type="EMDB" id="EMD-36919"/>
<dbReference type="SMR" id="Q93XI5"/>
<dbReference type="GO" id="GO:0005886">
    <property type="term" value="C:plasma membrane"/>
    <property type="evidence" value="ECO:0007669"/>
    <property type="project" value="TreeGrafter"/>
</dbReference>
<dbReference type="GO" id="GO:0008324">
    <property type="term" value="F:monoatomic cation transmembrane transporter activity"/>
    <property type="evidence" value="ECO:0007669"/>
    <property type="project" value="InterPro"/>
</dbReference>
<dbReference type="GO" id="GO:0098662">
    <property type="term" value="P:inorganic cation transmembrane transport"/>
    <property type="evidence" value="ECO:0007669"/>
    <property type="project" value="UniProtKB-ARBA"/>
</dbReference>
<dbReference type="GO" id="GO:0006813">
    <property type="term" value="P:potassium ion transport"/>
    <property type="evidence" value="ECO:0007669"/>
    <property type="project" value="UniProtKB-KW"/>
</dbReference>
<dbReference type="GO" id="GO:0006814">
    <property type="term" value="P:sodium ion transport"/>
    <property type="evidence" value="ECO:0007669"/>
    <property type="project" value="UniProtKB-KW"/>
</dbReference>
<dbReference type="InterPro" id="IPR003445">
    <property type="entry name" value="Cat_transpt"/>
</dbReference>
<dbReference type="InterPro" id="IPR051143">
    <property type="entry name" value="TrkH_K-transport"/>
</dbReference>
<dbReference type="PANTHER" id="PTHR31064:SF25">
    <property type="entry name" value="CATION TRANSPORTER HKT2_1"/>
    <property type="match status" value="1"/>
</dbReference>
<dbReference type="PANTHER" id="PTHR31064">
    <property type="entry name" value="POTASSIUM TRANSPORT PROTEIN DDB_G0292412-RELATED"/>
    <property type="match status" value="1"/>
</dbReference>
<dbReference type="Pfam" id="PF02386">
    <property type="entry name" value="TrkH"/>
    <property type="match status" value="1"/>
</dbReference>
<reference key="1">
    <citation type="journal article" date="2001" name="Plant J.">
        <title>Two types of HKT transporters with different properties of Na+ and K+ transport in Oryza sativa.</title>
        <authorList>
            <person name="Horie T."/>
            <person name="Yoshida K."/>
            <person name="Nakayama H."/>
            <person name="Yamada K."/>
            <person name="Oiki S."/>
            <person name="Shinmyo A."/>
        </authorList>
    </citation>
    <scope>NUCLEOTIDE SEQUENCE [MRNA]</scope>
    <scope>FUNCTION</scope>
    <scope>INDUCTION</scope>
    <source>
        <strain>cv. Pokkali</strain>
        <tissue>Seedling root</tissue>
    </source>
</reference>
<reference key="2">
    <citation type="journal article" date="2002" name="Proc. Natl. Acad. Sci. U.S.A.">
        <title>Glycine residues in potassium channel-like selectivity filters determine potassium selectivity in four-loop-per-subunit HKT transporters from plants.</title>
        <authorList>
            <person name="Maeser P."/>
            <person name="Hosoo Y."/>
            <person name="Goshima S."/>
            <person name="Horie T."/>
            <person name="Eckelman B."/>
            <person name="Yamada K."/>
            <person name="Yoshida K."/>
            <person name="Bakker E.P."/>
            <person name="Shinmyo A."/>
            <person name="Oiki S."/>
            <person name="Schroeder J.I."/>
            <person name="Uozumi N."/>
        </authorList>
    </citation>
    <scope>FUNCTION</scope>
    <scope>DOMAIN</scope>
    <scope>MUTAGENESIS OF GLY-88</scope>
</reference>
<reference key="3">
    <citation type="journal article" date="2006" name="Trends Plant Sci.">
        <title>Nomenclature for HKT transporters, key determinants of plant salinity tolerance.</title>
        <authorList>
            <person name="Platten J.D."/>
            <person name="Cotsaftis O."/>
            <person name="Berthomieu P."/>
            <person name="Bohnert H."/>
            <person name="Davenport R.J."/>
            <person name="Fairbairn D.J."/>
            <person name="Horie T."/>
            <person name="Leigh R.A."/>
            <person name="Lin H.X."/>
            <person name="Luan S."/>
            <person name="Maeser P."/>
            <person name="Pantoja O."/>
            <person name="Rodriguez-Navarro A."/>
            <person name="Schachtman D.P."/>
            <person name="Schroeder J.I."/>
            <person name="Sentenac H."/>
            <person name="Uozumi N."/>
            <person name="Very A.A."/>
            <person name="Zhu J.K."/>
            <person name="Dennis E.S."/>
            <person name="Tester M."/>
        </authorList>
    </citation>
    <scope>GENE FAMILY</scope>
    <scope>NOMENCLATURE</scope>
</reference>
<gene>
    <name evidence="4" type="primary">HKT2;2</name>
    <name evidence="4" type="synonym">HKT2</name>
</gene>